<name>OTC_BACCZ</name>
<feature type="chain" id="PRO_0000112880" description="Ornithine carbamoyltransferase">
    <location>
        <begin position="1"/>
        <end position="316"/>
    </location>
</feature>
<feature type="binding site" evidence="2">
    <location>
        <begin position="57"/>
        <end position="60"/>
    </location>
    <ligand>
        <name>carbamoyl phosphate</name>
        <dbReference type="ChEBI" id="CHEBI:58228"/>
    </ligand>
</feature>
<feature type="binding site" evidence="2">
    <location>
        <position position="84"/>
    </location>
    <ligand>
        <name>carbamoyl phosphate</name>
        <dbReference type="ChEBI" id="CHEBI:58228"/>
    </ligand>
</feature>
<feature type="binding site" evidence="2">
    <location>
        <position position="108"/>
    </location>
    <ligand>
        <name>carbamoyl phosphate</name>
        <dbReference type="ChEBI" id="CHEBI:58228"/>
    </ligand>
</feature>
<feature type="binding site" evidence="2">
    <location>
        <begin position="135"/>
        <end position="138"/>
    </location>
    <ligand>
        <name>carbamoyl phosphate</name>
        <dbReference type="ChEBI" id="CHEBI:58228"/>
    </ligand>
</feature>
<feature type="binding site" evidence="2">
    <location>
        <position position="166"/>
    </location>
    <ligand>
        <name>L-ornithine</name>
        <dbReference type="ChEBI" id="CHEBI:46911"/>
    </ligand>
</feature>
<feature type="binding site" evidence="2">
    <location>
        <position position="230"/>
    </location>
    <ligand>
        <name>L-ornithine</name>
        <dbReference type="ChEBI" id="CHEBI:46911"/>
    </ligand>
</feature>
<feature type="binding site" evidence="2">
    <location>
        <begin position="234"/>
        <end position="235"/>
    </location>
    <ligand>
        <name>L-ornithine</name>
        <dbReference type="ChEBI" id="CHEBI:46911"/>
    </ligand>
</feature>
<feature type="binding site" evidence="2">
    <location>
        <begin position="269"/>
        <end position="270"/>
    </location>
    <ligand>
        <name>carbamoyl phosphate</name>
        <dbReference type="ChEBI" id="CHEBI:58228"/>
    </ligand>
</feature>
<feature type="binding site" evidence="2">
    <location>
        <position position="297"/>
    </location>
    <ligand>
        <name>carbamoyl phosphate</name>
        <dbReference type="ChEBI" id="CHEBI:58228"/>
    </ligand>
</feature>
<protein>
    <recommendedName>
        <fullName evidence="2">Ornithine carbamoyltransferase</fullName>
        <shortName evidence="2">OTCase</shortName>
        <ecNumber evidence="2">2.1.3.3</ecNumber>
    </recommendedName>
</protein>
<keyword id="KW-0028">Amino-acid biosynthesis</keyword>
<keyword id="KW-0055">Arginine biosynthesis</keyword>
<keyword id="KW-0963">Cytoplasm</keyword>
<keyword id="KW-0808">Transferase</keyword>
<comment type="function">
    <text evidence="1">Reversibly catalyzes the transfer of the carbamoyl group from carbamoyl phosphate (CP) to the N(epsilon) atom of ornithine (ORN) to produce L-citrulline.</text>
</comment>
<comment type="catalytic activity">
    <reaction evidence="2">
        <text>carbamoyl phosphate + L-ornithine = L-citrulline + phosphate + H(+)</text>
        <dbReference type="Rhea" id="RHEA:19513"/>
        <dbReference type="ChEBI" id="CHEBI:15378"/>
        <dbReference type="ChEBI" id="CHEBI:43474"/>
        <dbReference type="ChEBI" id="CHEBI:46911"/>
        <dbReference type="ChEBI" id="CHEBI:57743"/>
        <dbReference type="ChEBI" id="CHEBI:58228"/>
        <dbReference type="EC" id="2.1.3.3"/>
    </reaction>
</comment>
<comment type="pathway">
    <text evidence="2">Amino-acid biosynthesis; L-arginine biosynthesis; L-arginine from L-ornithine and carbamoyl phosphate: step 1/3.</text>
</comment>
<comment type="subcellular location">
    <subcellularLocation>
        <location evidence="2">Cytoplasm</location>
    </subcellularLocation>
</comment>
<comment type="similarity">
    <text evidence="2">Belongs to the aspartate/ornithine carbamoyltransferase superfamily. OTCase family.</text>
</comment>
<proteinExistence type="inferred from homology"/>
<organism>
    <name type="scientific">Bacillus cereus (strain ZK / E33L)</name>
    <dbReference type="NCBI Taxonomy" id="288681"/>
    <lineage>
        <taxon>Bacteria</taxon>
        <taxon>Bacillati</taxon>
        <taxon>Bacillota</taxon>
        <taxon>Bacilli</taxon>
        <taxon>Bacillales</taxon>
        <taxon>Bacillaceae</taxon>
        <taxon>Bacillus</taxon>
        <taxon>Bacillus cereus group</taxon>
    </lineage>
</organism>
<accession>Q635F4</accession>
<evidence type="ECO:0000250" key="1"/>
<evidence type="ECO:0000255" key="2">
    <source>
        <dbReference type="HAMAP-Rule" id="MF_01109"/>
    </source>
</evidence>
<reference key="1">
    <citation type="journal article" date="2006" name="J. Bacteriol.">
        <title>Pathogenomic sequence analysis of Bacillus cereus and Bacillus thuringiensis isolates closely related to Bacillus anthracis.</title>
        <authorList>
            <person name="Han C.S."/>
            <person name="Xie G."/>
            <person name="Challacombe J.F."/>
            <person name="Altherr M.R."/>
            <person name="Bhotika S.S."/>
            <person name="Bruce D."/>
            <person name="Campbell C.S."/>
            <person name="Campbell M.L."/>
            <person name="Chen J."/>
            <person name="Chertkov O."/>
            <person name="Cleland C."/>
            <person name="Dimitrijevic M."/>
            <person name="Doggett N.A."/>
            <person name="Fawcett J.J."/>
            <person name="Glavina T."/>
            <person name="Goodwin L.A."/>
            <person name="Hill K.K."/>
            <person name="Hitchcock P."/>
            <person name="Jackson P.J."/>
            <person name="Keim P."/>
            <person name="Kewalramani A.R."/>
            <person name="Longmire J."/>
            <person name="Lucas S."/>
            <person name="Malfatti S."/>
            <person name="McMurry K."/>
            <person name="Meincke L.J."/>
            <person name="Misra M."/>
            <person name="Moseman B.L."/>
            <person name="Mundt M."/>
            <person name="Munk A.C."/>
            <person name="Okinaka R.T."/>
            <person name="Parson-Quintana B."/>
            <person name="Reilly L.P."/>
            <person name="Richardson P."/>
            <person name="Robinson D.L."/>
            <person name="Rubin E."/>
            <person name="Saunders E."/>
            <person name="Tapia R."/>
            <person name="Tesmer J.G."/>
            <person name="Thayer N."/>
            <person name="Thompson L.S."/>
            <person name="Tice H."/>
            <person name="Ticknor L.O."/>
            <person name="Wills P.L."/>
            <person name="Brettin T.S."/>
            <person name="Gilna P."/>
        </authorList>
    </citation>
    <scope>NUCLEOTIDE SEQUENCE [LARGE SCALE GENOMIC DNA]</scope>
    <source>
        <strain>ZK / E33L</strain>
    </source>
</reference>
<sequence length="316" mass="35271">MSTVQVPKLNTKDLLTLEELTQEEIISLIEFAIYLKNNKQEPLLQGKILGLIFDKHSTRTRVSFEAGMVQLGGHGMFLSGKEMQMGRGETVSDTAKVLSQYIDGIMIRTFSHADVEELAKESSIPVINGLTDDHHPCQALADLMTIYEEVNTFKGIKLAYVGDGNNVCHSLLLASAKVGMHMTVATPIGYEPNEEIVKKALAIAKETGAEIEILHNPELAVNEADFIYTDVWMSMGQEGEEEKYTLFQPYQINKELVKHAKQTYRFLHCLPAHREEEVTGEIIDGPQSIVFEQAGNRLHAQKALLVSLFKNVEEPS</sequence>
<gene>
    <name evidence="2" type="primary">argF</name>
    <name type="ordered locus">BCE33L3883</name>
</gene>
<dbReference type="EC" id="2.1.3.3" evidence="2"/>
<dbReference type="EMBL" id="CP000001">
    <property type="protein sequence ID" value="AAU16385.1"/>
    <property type="molecule type" value="Genomic_DNA"/>
</dbReference>
<dbReference type="RefSeq" id="WP_000108895.1">
    <property type="nucleotide sequence ID" value="NC_006274.1"/>
</dbReference>
<dbReference type="SMR" id="Q635F4"/>
<dbReference type="KEGG" id="bcz:BCE33L3883"/>
<dbReference type="PATRIC" id="fig|288681.22.peg.1516"/>
<dbReference type="UniPathway" id="UPA00068">
    <property type="reaction ID" value="UER00112"/>
</dbReference>
<dbReference type="Proteomes" id="UP000002612">
    <property type="component" value="Chromosome"/>
</dbReference>
<dbReference type="GO" id="GO:0005737">
    <property type="term" value="C:cytoplasm"/>
    <property type="evidence" value="ECO:0007669"/>
    <property type="project" value="UniProtKB-SubCell"/>
</dbReference>
<dbReference type="GO" id="GO:0016597">
    <property type="term" value="F:amino acid binding"/>
    <property type="evidence" value="ECO:0007669"/>
    <property type="project" value="InterPro"/>
</dbReference>
<dbReference type="GO" id="GO:0004585">
    <property type="term" value="F:ornithine carbamoyltransferase activity"/>
    <property type="evidence" value="ECO:0007669"/>
    <property type="project" value="UniProtKB-UniRule"/>
</dbReference>
<dbReference type="GO" id="GO:0042450">
    <property type="term" value="P:arginine biosynthetic process via ornithine"/>
    <property type="evidence" value="ECO:0007669"/>
    <property type="project" value="TreeGrafter"/>
</dbReference>
<dbReference type="GO" id="GO:0019240">
    <property type="term" value="P:citrulline biosynthetic process"/>
    <property type="evidence" value="ECO:0007669"/>
    <property type="project" value="TreeGrafter"/>
</dbReference>
<dbReference type="GO" id="GO:0006526">
    <property type="term" value="P:L-arginine biosynthetic process"/>
    <property type="evidence" value="ECO:0007669"/>
    <property type="project" value="UniProtKB-UniRule"/>
</dbReference>
<dbReference type="FunFam" id="3.40.50.1370:FF:000008">
    <property type="entry name" value="Ornithine carbamoyltransferase"/>
    <property type="match status" value="1"/>
</dbReference>
<dbReference type="FunFam" id="3.40.50.1370:FF:000016">
    <property type="entry name" value="Ornithine carbamoyltransferase"/>
    <property type="match status" value="1"/>
</dbReference>
<dbReference type="Gene3D" id="3.40.50.1370">
    <property type="entry name" value="Aspartate/ornithine carbamoyltransferase"/>
    <property type="match status" value="2"/>
</dbReference>
<dbReference type="HAMAP" id="MF_01109">
    <property type="entry name" value="OTCase"/>
    <property type="match status" value="1"/>
</dbReference>
<dbReference type="InterPro" id="IPR006132">
    <property type="entry name" value="Asp/Orn_carbamoyltranf_P-bd"/>
</dbReference>
<dbReference type="InterPro" id="IPR006130">
    <property type="entry name" value="Asp/Orn_carbamoylTrfase"/>
</dbReference>
<dbReference type="InterPro" id="IPR036901">
    <property type="entry name" value="Asp/Orn_carbamoylTrfase_sf"/>
</dbReference>
<dbReference type="InterPro" id="IPR006131">
    <property type="entry name" value="Asp_carbamoyltransf_Asp/Orn-bd"/>
</dbReference>
<dbReference type="InterPro" id="IPR002292">
    <property type="entry name" value="Orn/put_carbamltrans"/>
</dbReference>
<dbReference type="InterPro" id="IPR024904">
    <property type="entry name" value="OTCase_ArgI"/>
</dbReference>
<dbReference type="NCBIfam" id="TIGR00658">
    <property type="entry name" value="orni_carb_tr"/>
    <property type="match status" value="1"/>
</dbReference>
<dbReference type="NCBIfam" id="NF001986">
    <property type="entry name" value="PRK00779.1"/>
    <property type="match status" value="1"/>
</dbReference>
<dbReference type="PANTHER" id="PTHR45753">
    <property type="entry name" value="ORNITHINE CARBAMOYLTRANSFERASE, MITOCHONDRIAL"/>
    <property type="match status" value="1"/>
</dbReference>
<dbReference type="PANTHER" id="PTHR45753:SF3">
    <property type="entry name" value="ORNITHINE TRANSCARBAMYLASE, MITOCHONDRIAL"/>
    <property type="match status" value="1"/>
</dbReference>
<dbReference type="Pfam" id="PF00185">
    <property type="entry name" value="OTCace"/>
    <property type="match status" value="1"/>
</dbReference>
<dbReference type="Pfam" id="PF02729">
    <property type="entry name" value="OTCace_N"/>
    <property type="match status" value="1"/>
</dbReference>
<dbReference type="PRINTS" id="PR00100">
    <property type="entry name" value="AOTCASE"/>
</dbReference>
<dbReference type="PRINTS" id="PR00102">
    <property type="entry name" value="OTCASE"/>
</dbReference>
<dbReference type="SUPFAM" id="SSF53671">
    <property type="entry name" value="Aspartate/ornithine carbamoyltransferase"/>
    <property type="match status" value="1"/>
</dbReference>
<dbReference type="PROSITE" id="PS00097">
    <property type="entry name" value="CARBAMOYLTRANSFERASE"/>
    <property type="match status" value="1"/>
</dbReference>